<organism>
    <name type="scientific">Bothrops jararaca</name>
    <name type="common">Jararaca</name>
    <name type="synonym">Bothrops jajaraca</name>
    <dbReference type="NCBI Taxonomy" id="8724"/>
    <lineage>
        <taxon>Eukaryota</taxon>
        <taxon>Metazoa</taxon>
        <taxon>Chordata</taxon>
        <taxon>Craniata</taxon>
        <taxon>Vertebrata</taxon>
        <taxon>Euteleostomi</taxon>
        <taxon>Lepidosauria</taxon>
        <taxon>Squamata</taxon>
        <taxon>Bifurcata</taxon>
        <taxon>Unidentata</taxon>
        <taxon>Episquamata</taxon>
        <taxon>Toxicofera</taxon>
        <taxon>Serpentes</taxon>
        <taxon>Colubroidea</taxon>
        <taxon>Viperidae</taxon>
        <taxon>Crotalinae</taxon>
        <taxon>Bothrops</taxon>
    </lineage>
</organism>
<keyword id="KW-0002">3D-structure</keyword>
<keyword id="KW-0903">Direct protein sequencing</keyword>
<keyword id="KW-1015">Disulfide bond</keyword>
<keyword id="KW-1199">Hemostasis impairing toxin</keyword>
<keyword id="KW-1202">Platelet aggregation activating toxin</keyword>
<keyword id="KW-0964">Secreted</keyword>
<keyword id="KW-0800">Toxin</keyword>
<accession>P22030</accession>
<protein>
    <recommendedName>
        <fullName>Snaclec botrocetin subunit beta</fullName>
    </recommendedName>
    <alternativeName>
        <fullName>Platelet coagglutinin</fullName>
    </alternativeName>
</protein>
<comment type="function">
    <text>Snaclec that binds to von Willebrand factor (VWF) and induces its interaction with GPIbalpha (GP1BA) (via the vWF A1 domain), resulting in platelet aggregation.</text>
</comment>
<comment type="subunit">
    <text evidence="2 3 4 5">Heterodimer of subunits alpha and beta; disulfide-linked. Botrocetin and vWF form a soluble complex.</text>
</comment>
<comment type="subcellular location">
    <subcellularLocation>
        <location>Secreted</location>
    </subcellularLocation>
</comment>
<comment type="tissue specificity">
    <text>Expressed by the venom gland.</text>
</comment>
<comment type="biotechnology">
    <text>Is a standard reagent for testing vWF/platelet interactions and detection of the defects in von Willebrand disease and in GPIb-related disorders such as Bernard-Soulier syndrome.</text>
</comment>
<comment type="miscellaneous">
    <text evidence="7">There are two distinct forms of the vWF-dependent platelet coagglutinin. The dimeric form (snaclec) is 34-fold more active than the metalloprotease botrocetin in promoting vWF binding to platelets (PubMed:1993206).</text>
</comment>
<comment type="similarity">
    <text evidence="6">Belongs to the snaclec family.</text>
</comment>
<sequence length="125" mass="15037">DCPPDWSSYEGHCYRFFKEWMHWDDAEEFCTEQQTGAHLVSFQSKEEADFVRSLTSEMLKGDVVWIGLSDVWNKCRFEWTDGMEFDYDDYYLIAEYECVASKPTNNKWWIIPCTRFKNFVCEFQA</sequence>
<evidence type="ECO:0000255" key="1">
    <source>
        <dbReference type="PROSITE-ProRule" id="PRU00040"/>
    </source>
</evidence>
<evidence type="ECO:0000269" key="2">
    <source>
    </source>
</evidence>
<evidence type="ECO:0000269" key="3">
    <source>
    </source>
</evidence>
<evidence type="ECO:0000269" key="4">
    <source>
    </source>
</evidence>
<evidence type="ECO:0000269" key="5">
    <source>
    </source>
</evidence>
<evidence type="ECO:0000305" key="6"/>
<evidence type="ECO:0000305" key="7">
    <source>
    </source>
</evidence>
<evidence type="ECO:0007829" key="8">
    <source>
        <dbReference type="PDB" id="1FVU"/>
    </source>
</evidence>
<evidence type="ECO:0007829" key="9">
    <source>
        <dbReference type="PDB" id="1IJK"/>
    </source>
</evidence>
<evidence type="ECO:0007829" key="10">
    <source>
        <dbReference type="PDB" id="1U0N"/>
    </source>
</evidence>
<dbReference type="PIR" id="B47267">
    <property type="entry name" value="B47267"/>
</dbReference>
<dbReference type="PDB" id="1FVU">
    <property type="method" value="X-ray"/>
    <property type="resolution" value="1.80 A"/>
    <property type="chains" value="B/D=1-125"/>
</dbReference>
<dbReference type="PDB" id="1IJK">
    <property type="method" value="X-ray"/>
    <property type="resolution" value="2.60 A"/>
    <property type="chains" value="C=1-125"/>
</dbReference>
<dbReference type="PDB" id="1U0N">
    <property type="method" value="X-ray"/>
    <property type="resolution" value="2.95 A"/>
    <property type="chains" value="C=1-125"/>
</dbReference>
<dbReference type="PDB" id="1U0O">
    <property type="method" value="X-ray"/>
    <property type="resolution" value="2.70 A"/>
    <property type="chains" value="B=1-125"/>
</dbReference>
<dbReference type="PDBsum" id="1FVU"/>
<dbReference type="PDBsum" id="1IJK"/>
<dbReference type="PDBsum" id="1U0N"/>
<dbReference type="PDBsum" id="1U0O"/>
<dbReference type="SMR" id="P22030"/>
<dbReference type="EvolutionaryTrace" id="P22030"/>
<dbReference type="GO" id="GO:0005576">
    <property type="term" value="C:extracellular region"/>
    <property type="evidence" value="ECO:0007669"/>
    <property type="project" value="UniProtKB-SubCell"/>
</dbReference>
<dbReference type="GO" id="GO:0090729">
    <property type="term" value="F:toxin activity"/>
    <property type="evidence" value="ECO:0007669"/>
    <property type="project" value="UniProtKB-KW"/>
</dbReference>
<dbReference type="FunFam" id="3.10.100.10:FF:000087">
    <property type="entry name" value="Snaclec rhodocetin subunit delta"/>
    <property type="match status" value="1"/>
</dbReference>
<dbReference type="Gene3D" id="3.10.100.10">
    <property type="entry name" value="Mannose-Binding Protein A, subunit A"/>
    <property type="match status" value="1"/>
</dbReference>
<dbReference type="InterPro" id="IPR001304">
    <property type="entry name" value="C-type_lectin-like"/>
</dbReference>
<dbReference type="InterPro" id="IPR016186">
    <property type="entry name" value="C-type_lectin-like/link_sf"/>
</dbReference>
<dbReference type="InterPro" id="IPR050111">
    <property type="entry name" value="C-type_lectin/snaclec_domain"/>
</dbReference>
<dbReference type="InterPro" id="IPR016187">
    <property type="entry name" value="CTDL_fold"/>
</dbReference>
<dbReference type="PANTHER" id="PTHR22803">
    <property type="entry name" value="MANNOSE, PHOSPHOLIPASE, LECTIN RECEPTOR RELATED"/>
    <property type="match status" value="1"/>
</dbReference>
<dbReference type="Pfam" id="PF00059">
    <property type="entry name" value="Lectin_C"/>
    <property type="match status" value="1"/>
</dbReference>
<dbReference type="SMART" id="SM00034">
    <property type="entry name" value="CLECT"/>
    <property type="match status" value="1"/>
</dbReference>
<dbReference type="SUPFAM" id="SSF56436">
    <property type="entry name" value="C-type lectin-like"/>
    <property type="match status" value="1"/>
</dbReference>
<dbReference type="PROSITE" id="PS50041">
    <property type="entry name" value="C_TYPE_LECTIN_2"/>
    <property type="match status" value="1"/>
</dbReference>
<name>SLEB_BOTJA</name>
<feature type="chain" id="PRO_0000046698" description="Snaclec botrocetin subunit beta">
    <location>
        <begin position="1"/>
        <end position="125"/>
    </location>
</feature>
<feature type="domain" description="C-type lectin" evidence="1">
    <location>
        <begin position="9"/>
        <end position="122"/>
    </location>
</feature>
<feature type="disulfide bond" evidence="1 5">
    <location>
        <begin position="2"/>
        <end position="13"/>
    </location>
</feature>
<feature type="disulfide bond">
    <location>
        <begin position="30"/>
        <end position="121"/>
    </location>
</feature>
<feature type="disulfide bond" description="Interchain (with C-80 in alpha chain)">
    <location>
        <position position="75"/>
    </location>
</feature>
<feature type="disulfide bond">
    <location>
        <begin position="98"/>
        <end position="113"/>
    </location>
</feature>
<feature type="strand" evidence="8">
    <location>
        <begin position="7"/>
        <end position="9"/>
    </location>
</feature>
<feature type="strand" evidence="8">
    <location>
        <begin position="12"/>
        <end position="21"/>
    </location>
</feature>
<feature type="helix" evidence="8">
    <location>
        <begin position="23"/>
        <end position="33"/>
    </location>
</feature>
<feature type="strand" evidence="10">
    <location>
        <begin position="34"/>
        <end position="39"/>
    </location>
</feature>
<feature type="helix" evidence="8">
    <location>
        <begin position="45"/>
        <end position="52"/>
    </location>
</feature>
<feature type="turn" evidence="9">
    <location>
        <begin position="71"/>
        <end position="74"/>
    </location>
</feature>
<feature type="strand" evidence="8">
    <location>
        <begin position="77"/>
        <end position="79"/>
    </location>
</feature>
<feature type="helix" evidence="9">
    <location>
        <begin position="87"/>
        <end position="89"/>
    </location>
</feature>
<feature type="strand" evidence="8">
    <location>
        <begin position="97"/>
        <end position="102"/>
    </location>
</feature>
<feature type="turn" evidence="8">
    <location>
        <begin position="103"/>
        <end position="106"/>
    </location>
</feature>
<feature type="strand" evidence="8">
    <location>
        <begin position="107"/>
        <end position="112"/>
    </location>
</feature>
<feature type="strand" evidence="8">
    <location>
        <begin position="117"/>
        <end position="123"/>
    </location>
</feature>
<proteinExistence type="evidence at protein level"/>
<reference key="1">
    <citation type="journal article" date="1993" name="Proc. Natl. Acad. Sci. U.S.A.">
        <title>Primary structure of two-chain botrocetin, a von Willebrand factor modulator purified from the venom of Bothrops jararaca.</title>
        <authorList>
            <person name="Usami Y."/>
            <person name="Fujimura Y."/>
            <person name="Suzuki M."/>
            <person name="Ozeki Y."/>
            <person name="Nishio K."/>
            <person name="Fukui H."/>
            <person name="Titani K."/>
        </authorList>
    </citation>
    <scope>PROTEIN SEQUENCE</scope>
    <scope>DISULFIDE BONDS</scope>
    <source>
        <tissue>Venom</tissue>
    </source>
</reference>
<reference key="2">
    <citation type="journal article" date="1991" name="Biochemistry">
        <title>Isolation and chemical characterization of two structurally and functionally distinct forms of botrocetin, the platelet coagglutinin isolated from the venom of Bothrops jararaca.</title>
        <authorList>
            <person name="Fujimura Y."/>
            <person name="Titani K."/>
            <person name="Usami Y."/>
            <person name="Suzuki M."/>
            <person name="Oyama R."/>
            <person name="Matsui T."/>
            <person name="Fukui H."/>
            <person name="Sugimoto M."/>
            <person name="Ruggeri Z.M."/>
        </authorList>
    </citation>
    <scope>PROTEIN SEQUENCE OF 1-40</scope>
    <source>
        <tissue>Venom</tissue>
    </source>
</reference>
<reference key="3">
    <citation type="journal article" date="2001" name="Biochemistry">
        <title>Crystal structure of the von Willebrand factor modulator botrocetin.</title>
        <authorList>
            <person name="Sen U."/>
            <person name="Vasudevan S."/>
            <person name="Subbarao G."/>
            <person name="McClintock R.A."/>
            <person name="Celikel R."/>
            <person name="Ruggeri Z.M."/>
            <person name="Varughese K.I."/>
        </authorList>
    </citation>
    <scope>X-RAY CRYSTALLOGRAPHY (1.8 ANGSTROMS)</scope>
    <scope>DISULFIDE BOND</scope>
</reference>
<reference key="4">
    <citation type="journal article" date="2002" name="Structure">
        <title>Structural basis of von Willebrand factor activation by the snake toxin botrocetin.</title>
        <authorList>
            <person name="Fukuda K."/>
            <person name="Doggett T.A."/>
            <person name="Bankston L.A."/>
            <person name="Cruz M.A."/>
            <person name="Diacovo T.G."/>
            <person name="Liddington R.C."/>
        </authorList>
    </citation>
    <scope>X-RAY CRYSTALLOGRAPHY (2.6 ANGSTROMS)</scope>
    <scope>DISULFIDE BOND</scope>
</reference>
<reference key="5">
    <citation type="journal article" date="2005" name="Nat. Struct. Mol. Biol.">
        <title>The snake venom protein botrocetin acts as a biological brace to promote dysfunctional platelet aggregation.</title>
        <authorList>
            <person name="Fukuda K."/>
            <person name="Doggett T."/>
            <person name="Laurenzi I.J."/>
            <person name="Liddington R.C."/>
            <person name="Diacovo T.G."/>
        </authorList>
    </citation>
    <scope>X-RAY CRYSTALLOGRAPHY (2.7 ANGSTROMS)</scope>
    <scope>DISULFIDE BOND</scope>
</reference>